<feature type="chain" id="PRO_0000060872" description="Cytochrome b">
    <location>
        <begin position="1"/>
        <end position="398"/>
    </location>
</feature>
<feature type="transmembrane region" description="Helical" evidence="3">
    <location>
        <begin position="38"/>
        <end position="58"/>
    </location>
</feature>
<feature type="transmembrane region" description="Helical" evidence="3">
    <location>
        <begin position="82"/>
        <end position="104"/>
    </location>
</feature>
<feature type="transmembrane region" description="Helical" evidence="3">
    <location>
        <begin position="119"/>
        <end position="139"/>
    </location>
</feature>
<feature type="transmembrane region" description="Helical" evidence="3">
    <location>
        <begin position="185"/>
        <end position="205"/>
    </location>
</feature>
<feature type="transmembrane region" description="Helical" evidence="3">
    <location>
        <begin position="231"/>
        <end position="251"/>
    </location>
</feature>
<feature type="transmembrane region" description="Helical" evidence="3">
    <location>
        <begin position="295"/>
        <end position="316"/>
    </location>
</feature>
<feature type="transmembrane region" description="Helical" evidence="3">
    <location>
        <begin position="328"/>
        <end position="348"/>
    </location>
</feature>
<feature type="transmembrane region" description="Helical" evidence="3">
    <location>
        <begin position="355"/>
        <end position="374"/>
    </location>
</feature>
<feature type="binding site" description="axial binding residue" evidence="3">
    <location>
        <position position="88"/>
    </location>
    <ligand>
        <name>heme b</name>
        <dbReference type="ChEBI" id="CHEBI:60344"/>
        <label>b562</label>
    </ligand>
    <ligandPart>
        <name>Fe</name>
        <dbReference type="ChEBI" id="CHEBI:18248"/>
    </ligandPart>
</feature>
<feature type="binding site" description="axial binding residue" evidence="3">
    <location>
        <position position="102"/>
    </location>
    <ligand>
        <name>heme b</name>
        <dbReference type="ChEBI" id="CHEBI:60344"/>
        <label>b566</label>
    </ligand>
    <ligandPart>
        <name>Fe</name>
        <dbReference type="ChEBI" id="CHEBI:18248"/>
    </ligandPart>
</feature>
<feature type="binding site" description="axial binding residue" evidence="3">
    <location>
        <position position="189"/>
    </location>
    <ligand>
        <name>heme b</name>
        <dbReference type="ChEBI" id="CHEBI:60344"/>
        <label>b562</label>
    </ligand>
    <ligandPart>
        <name>Fe</name>
        <dbReference type="ChEBI" id="CHEBI:18248"/>
    </ligandPart>
</feature>
<feature type="binding site" description="axial binding residue" evidence="3">
    <location>
        <position position="203"/>
    </location>
    <ligand>
        <name>heme b</name>
        <dbReference type="ChEBI" id="CHEBI:60344"/>
        <label>b566</label>
    </ligand>
    <ligandPart>
        <name>Fe</name>
        <dbReference type="ChEBI" id="CHEBI:18248"/>
    </ligandPart>
</feature>
<feature type="binding site" evidence="2">
    <location>
        <position position="208"/>
    </location>
    <ligand>
        <name>a ubiquinone</name>
        <dbReference type="ChEBI" id="CHEBI:16389"/>
    </ligand>
</feature>
<organism>
    <name type="scientific">Daucus carota</name>
    <name type="common">Wild carrot</name>
    <dbReference type="NCBI Taxonomy" id="4039"/>
    <lineage>
        <taxon>Eukaryota</taxon>
        <taxon>Viridiplantae</taxon>
        <taxon>Streptophyta</taxon>
        <taxon>Embryophyta</taxon>
        <taxon>Tracheophyta</taxon>
        <taxon>Spermatophyta</taxon>
        <taxon>Magnoliopsida</taxon>
        <taxon>eudicotyledons</taxon>
        <taxon>Gunneridae</taxon>
        <taxon>Pentapetalae</taxon>
        <taxon>asterids</taxon>
        <taxon>campanulids</taxon>
        <taxon>Apiales</taxon>
        <taxon>Apiaceae</taxon>
        <taxon>Apioideae</taxon>
        <taxon>Scandiceae</taxon>
        <taxon>Daucinae</taxon>
        <taxon>Daucus</taxon>
        <taxon>Daucus sect. Daucus</taxon>
    </lineage>
</organism>
<gene>
    <name type="primary">MT-CYB</name>
    <name type="synonym">COB</name>
    <name type="synonym">CYTB</name>
    <name type="synonym">MTCYB</name>
</gene>
<reference key="1">
    <citation type="submission" date="2000-09" db="EMBL/GenBank/DDBJ databases">
        <title>PCR-based markers to differentiate the mitochondrial genomes of petaloid and male fertile carrot (Daucus carota L.).</title>
        <authorList>
            <person name="Bach I.C."/>
            <person name="Olesen A."/>
            <person name="Simon P.W."/>
        </authorList>
    </citation>
    <scope>NUCLEOTIDE SEQUENCE [GENOMIC DNA]</scope>
    <source>
        <strain>cv. K831B</strain>
    </source>
</reference>
<sequence>MTIRNQRFSLLKQPIFSILNQHLINYPTPSNLNYWAGFGPLAGICLVIQIVTGVFLAMHYTPHVDLAFNSVEHIMRDVEGGWFLRYMHANGASMFLIVVHFHMFRSLYYGSYSSPREFVRCSGVVIFLLMIVTAFIGYVPPWGQMSFWGATVITSLASAIPVVGDTIVTWLWGGFSVGNATLNRFFSLHYLLPFLLVGASILHLGALHQYGSNNPLGINSYTDKIASYPYYYVKDLVGWVAFAIFSSIFIFYAPNVLGHPDNYIPANPMPTPPHIVPEWYFLPIHAILRSIPDKAGGVAAIAPVFICLLALPFLNQSMYVRSAKFRPIYHIIYLLFLADRLLLGWIGCQPVEAPFVTIGQISPFVFFLFFAIMPIPGRVQRENPNYFSENFAFSYPKK</sequence>
<protein>
    <recommendedName>
        <fullName>Cytochrome b</fullName>
    </recommendedName>
    <alternativeName>
        <fullName>Complex III subunit 3</fullName>
    </alternativeName>
    <alternativeName>
        <fullName>Complex III subunit III</fullName>
    </alternativeName>
    <alternativeName>
        <fullName>Cytochrome b-c1 complex subunit 3</fullName>
    </alternativeName>
    <alternativeName>
        <fullName>Ubiquinol-cytochrome-c reductase complex cytochrome b subunit</fullName>
    </alternativeName>
</protein>
<evidence type="ECO:0000250" key="1"/>
<evidence type="ECO:0000250" key="2">
    <source>
        <dbReference type="UniProtKB" id="P00157"/>
    </source>
</evidence>
<evidence type="ECO:0000250" key="3">
    <source>
        <dbReference type="UniProtKB" id="P00163"/>
    </source>
</evidence>
<evidence type="ECO:0000255" key="4">
    <source>
        <dbReference type="PROSITE-ProRule" id="PRU00967"/>
    </source>
</evidence>
<evidence type="ECO:0000255" key="5">
    <source>
        <dbReference type="PROSITE-ProRule" id="PRU00968"/>
    </source>
</evidence>
<proteinExistence type="inferred from homology"/>
<comment type="function">
    <text evidence="3">Component of the ubiquinol-cytochrome c reductase complex (complex III or cytochrome b-c1 complex) that is part of the mitochondrial respiratory chain. The b-c1 complex mediates electron transfer from ubiquinol to cytochrome c. Contributes to the generation of a proton gradient across the mitochondrial membrane that is then used for ATP synthesis.</text>
</comment>
<comment type="cofactor">
    <cofactor evidence="3">
        <name>heme b</name>
        <dbReference type="ChEBI" id="CHEBI:60344"/>
    </cofactor>
    <text evidence="3">Binds 2 heme b groups non-covalently.</text>
</comment>
<comment type="subunit">
    <text evidence="1">The main subunits of complex b-c1 are: cytochrome b, cytochrome c1 and the Rieske protein.</text>
</comment>
<comment type="subcellular location">
    <subcellularLocation>
        <location evidence="3">Mitochondrion inner membrane</location>
        <topology evidence="3">Multi-pass membrane protein</topology>
    </subcellularLocation>
</comment>
<comment type="miscellaneous">
    <text evidence="1">Heme 1 (or BL or b562) is low-potential and absorbs at about 562 nm, and heme 2 (or BH or b566) is high-potential and absorbs at about 566 nm.</text>
</comment>
<comment type="similarity">
    <text evidence="4 5">Belongs to the cytochrome b family.</text>
</comment>
<comment type="caution">
    <text evidence="3">The protein contains only eight transmembrane helices, not nine as predicted by bioinformatics tools.</text>
</comment>
<accession>Q94S37</accession>
<dbReference type="EMBL" id="AY007816">
    <property type="protein sequence ID" value="AAK00517.1"/>
    <property type="molecule type" value="Genomic_DNA"/>
</dbReference>
<dbReference type="SMR" id="Q94S37"/>
<dbReference type="OMA" id="NISAWWN"/>
<dbReference type="GO" id="GO:0005743">
    <property type="term" value="C:mitochondrial inner membrane"/>
    <property type="evidence" value="ECO:0007669"/>
    <property type="project" value="UniProtKB-SubCell"/>
</dbReference>
<dbReference type="GO" id="GO:0045275">
    <property type="term" value="C:respiratory chain complex III"/>
    <property type="evidence" value="ECO:0007669"/>
    <property type="project" value="InterPro"/>
</dbReference>
<dbReference type="GO" id="GO:0046872">
    <property type="term" value="F:metal ion binding"/>
    <property type="evidence" value="ECO:0007669"/>
    <property type="project" value="UniProtKB-KW"/>
</dbReference>
<dbReference type="GO" id="GO:0008121">
    <property type="term" value="F:ubiquinol-cytochrome-c reductase activity"/>
    <property type="evidence" value="ECO:0007669"/>
    <property type="project" value="InterPro"/>
</dbReference>
<dbReference type="GO" id="GO:0006122">
    <property type="term" value="P:mitochondrial electron transport, ubiquinol to cytochrome c"/>
    <property type="evidence" value="ECO:0007669"/>
    <property type="project" value="TreeGrafter"/>
</dbReference>
<dbReference type="CDD" id="cd00290">
    <property type="entry name" value="cytochrome_b_C"/>
    <property type="match status" value="1"/>
</dbReference>
<dbReference type="CDD" id="cd00284">
    <property type="entry name" value="Cytochrome_b_N"/>
    <property type="match status" value="1"/>
</dbReference>
<dbReference type="FunFam" id="1.20.810.10:FF:000006">
    <property type="entry name" value="Cytochrome b"/>
    <property type="match status" value="1"/>
</dbReference>
<dbReference type="Gene3D" id="1.20.810.10">
    <property type="entry name" value="Cytochrome Bc1 Complex, Chain C"/>
    <property type="match status" value="1"/>
</dbReference>
<dbReference type="InterPro" id="IPR005798">
    <property type="entry name" value="Cyt_b/b6_C"/>
</dbReference>
<dbReference type="InterPro" id="IPR036150">
    <property type="entry name" value="Cyt_b/b6_C_sf"/>
</dbReference>
<dbReference type="InterPro" id="IPR005797">
    <property type="entry name" value="Cyt_b/b6_N"/>
</dbReference>
<dbReference type="InterPro" id="IPR027387">
    <property type="entry name" value="Cytb/b6-like_sf"/>
</dbReference>
<dbReference type="InterPro" id="IPR030689">
    <property type="entry name" value="Cytochrome_b"/>
</dbReference>
<dbReference type="InterPro" id="IPR048260">
    <property type="entry name" value="Cytochrome_b_C_euk/bac"/>
</dbReference>
<dbReference type="InterPro" id="IPR048259">
    <property type="entry name" value="Cytochrome_b_N_euk/bac"/>
</dbReference>
<dbReference type="InterPro" id="IPR016174">
    <property type="entry name" value="Di-haem_cyt_TM"/>
</dbReference>
<dbReference type="PANTHER" id="PTHR19271">
    <property type="entry name" value="CYTOCHROME B"/>
    <property type="match status" value="1"/>
</dbReference>
<dbReference type="PANTHER" id="PTHR19271:SF16">
    <property type="entry name" value="CYTOCHROME B"/>
    <property type="match status" value="1"/>
</dbReference>
<dbReference type="Pfam" id="PF00032">
    <property type="entry name" value="Cytochrom_B_C"/>
    <property type="match status" value="1"/>
</dbReference>
<dbReference type="Pfam" id="PF00033">
    <property type="entry name" value="Cytochrome_B"/>
    <property type="match status" value="1"/>
</dbReference>
<dbReference type="PIRSF" id="PIRSF038885">
    <property type="entry name" value="COB"/>
    <property type="match status" value="1"/>
</dbReference>
<dbReference type="SUPFAM" id="SSF81648">
    <property type="entry name" value="a domain/subunit of cytochrome bc1 complex (Ubiquinol-cytochrome c reductase)"/>
    <property type="match status" value="1"/>
</dbReference>
<dbReference type="SUPFAM" id="SSF81342">
    <property type="entry name" value="Transmembrane di-heme cytochromes"/>
    <property type="match status" value="1"/>
</dbReference>
<dbReference type="PROSITE" id="PS51003">
    <property type="entry name" value="CYTB_CTER"/>
    <property type="match status" value="1"/>
</dbReference>
<dbReference type="PROSITE" id="PS51002">
    <property type="entry name" value="CYTB_NTER"/>
    <property type="match status" value="1"/>
</dbReference>
<keyword id="KW-0249">Electron transport</keyword>
<keyword id="KW-0349">Heme</keyword>
<keyword id="KW-0408">Iron</keyword>
<keyword id="KW-0472">Membrane</keyword>
<keyword id="KW-0479">Metal-binding</keyword>
<keyword id="KW-0496">Mitochondrion</keyword>
<keyword id="KW-0999">Mitochondrion inner membrane</keyword>
<keyword id="KW-0679">Respiratory chain</keyword>
<keyword id="KW-0812">Transmembrane</keyword>
<keyword id="KW-1133">Transmembrane helix</keyword>
<keyword id="KW-0813">Transport</keyword>
<keyword id="KW-0830">Ubiquinone</keyword>
<geneLocation type="mitochondrion"/>
<name>CYB_DAUCA</name>